<reference key="1">
    <citation type="journal article" date="2006" name="Mol. Reprod. Dev.">
        <title>Expression of p27BBP/eIF6 is highly modulated during Xenopus laevis embryogenesis.</title>
        <authorList>
            <person name="Vaccaro M.C."/>
            <person name="Cuccaro M."/>
            <person name="De Marco N."/>
            <person name="Campanella C."/>
        </authorList>
    </citation>
    <scope>NUCLEOTIDE SEQUENCE [MRNA]</scope>
</reference>
<reference key="2">
    <citation type="submission" date="2004-05" db="EMBL/GenBank/DDBJ databases">
        <authorList>
            <consortium name="NIH - Xenopus Gene Collection (XGC) project"/>
        </authorList>
    </citation>
    <scope>NUCLEOTIDE SEQUENCE [LARGE SCALE MRNA]</scope>
    <source>
        <tissue>Embryo</tissue>
    </source>
</reference>
<comment type="function">
    <text evidence="1">Binds to the 60S ribosomal subunit and prevents its association with the 40S ribosomal subunit to form the 80S initiation complex in the cytoplasm. May also be involved in ribosome biogenesis.</text>
</comment>
<comment type="subunit">
    <text evidence="1">Monomer. Associates with the 60S ribosomal subunit.</text>
</comment>
<comment type="subcellular location">
    <subcellularLocation>
        <location evidence="1">Cytoplasm</location>
    </subcellularLocation>
    <subcellularLocation>
        <location evidence="1">Nucleus</location>
        <location evidence="1">Nucleolus</location>
    </subcellularLocation>
    <text evidence="1">Shuttles between cytoplasm and nucleus/nucleolus.</text>
</comment>
<comment type="similarity">
    <text evidence="1">Belongs to the eIF-6 family.</text>
</comment>
<keyword id="KW-0963">Cytoplasm</keyword>
<keyword id="KW-0396">Initiation factor</keyword>
<keyword id="KW-0539">Nucleus</keyword>
<keyword id="KW-0648">Protein biosynthesis</keyword>
<keyword id="KW-1185">Reference proteome</keyword>
<keyword id="KW-0690">Ribosome biogenesis</keyword>
<dbReference type="EMBL" id="AY383654">
    <property type="protein sequence ID" value="AAQ88443.1"/>
    <property type="molecule type" value="mRNA"/>
</dbReference>
<dbReference type="EMBL" id="BC071088">
    <property type="protein sequence ID" value="AAH71088.1"/>
    <property type="molecule type" value="mRNA"/>
</dbReference>
<dbReference type="RefSeq" id="NP_001083080.1">
    <property type="nucleotide sequence ID" value="NM_001089611.1"/>
</dbReference>
<dbReference type="SMR" id="Q6GR45"/>
<dbReference type="iPTMnet" id="Q6GR45"/>
<dbReference type="DNASU" id="398731"/>
<dbReference type="GeneID" id="398731"/>
<dbReference type="KEGG" id="xla:398731"/>
<dbReference type="AGR" id="Xenbase:XB-GENE-868348"/>
<dbReference type="CTD" id="398731"/>
<dbReference type="Xenbase" id="XB-GENE-868348">
    <property type="gene designation" value="eif6.S"/>
</dbReference>
<dbReference type="OrthoDB" id="4155914at2759"/>
<dbReference type="Proteomes" id="UP000186698">
    <property type="component" value="Chromosome 9_10S"/>
</dbReference>
<dbReference type="Bgee" id="398731">
    <property type="expression patterns" value="Expressed in egg cell and 19 other cell types or tissues"/>
</dbReference>
<dbReference type="GO" id="GO:0005829">
    <property type="term" value="C:cytosol"/>
    <property type="evidence" value="ECO:0000318"/>
    <property type="project" value="GO_Central"/>
</dbReference>
<dbReference type="GO" id="GO:0005730">
    <property type="term" value="C:nucleolus"/>
    <property type="evidence" value="ECO:0007669"/>
    <property type="project" value="UniProtKB-SubCell"/>
</dbReference>
<dbReference type="GO" id="GO:0005634">
    <property type="term" value="C:nucleus"/>
    <property type="evidence" value="ECO:0000318"/>
    <property type="project" value="GO_Central"/>
</dbReference>
<dbReference type="GO" id="GO:0043023">
    <property type="term" value="F:ribosomal large subunit binding"/>
    <property type="evidence" value="ECO:0000318"/>
    <property type="project" value="GO_Central"/>
</dbReference>
<dbReference type="GO" id="GO:0003743">
    <property type="term" value="F:translation initiation factor activity"/>
    <property type="evidence" value="ECO:0007669"/>
    <property type="project" value="UniProtKB-UniRule"/>
</dbReference>
<dbReference type="GO" id="GO:1902626">
    <property type="term" value="P:assembly of large subunit precursor of preribosome"/>
    <property type="evidence" value="ECO:0000318"/>
    <property type="project" value="GO_Central"/>
</dbReference>
<dbReference type="GO" id="GO:0042256">
    <property type="term" value="P:cytosolic ribosome assembly"/>
    <property type="evidence" value="ECO:0007669"/>
    <property type="project" value="UniProtKB-UniRule"/>
</dbReference>
<dbReference type="GO" id="GO:0000460">
    <property type="term" value="P:maturation of 5.8S rRNA"/>
    <property type="evidence" value="ECO:0000318"/>
    <property type="project" value="GO_Central"/>
</dbReference>
<dbReference type="GO" id="GO:0000470">
    <property type="term" value="P:maturation of LSU-rRNA"/>
    <property type="evidence" value="ECO:0000318"/>
    <property type="project" value="GO_Central"/>
</dbReference>
<dbReference type="GO" id="GO:0000054">
    <property type="term" value="P:ribosomal subunit export from nucleus"/>
    <property type="evidence" value="ECO:0000318"/>
    <property type="project" value="GO_Central"/>
</dbReference>
<dbReference type="CDD" id="cd00527">
    <property type="entry name" value="IF6"/>
    <property type="match status" value="1"/>
</dbReference>
<dbReference type="FunFam" id="3.75.10.10:FF:000001">
    <property type="entry name" value="Eukaryotic translation initiation factor 6"/>
    <property type="match status" value="1"/>
</dbReference>
<dbReference type="Gene3D" id="3.75.10.10">
    <property type="entry name" value="L-arginine/glycine Amidinotransferase, Chain A"/>
    <property type="match status" value="1"/>
</dbReference>
<dbReference type="HAMAP" id="MF_00032">
    <property type="entry name" value="eIF_6"/>
    <property type="match status" value="1"/>
</dbReference>
<dbReference type="InterPro" id="IPR002769">
    <property type="entry name" value="eIF6"/>
</dbReference>
<dbReference type="NCBIfam" id="TIGR00323">
    <property type="entry name" value="eIF-6"/>
    <property type="match status" value="1"/>
</dbReference>
<dbReference type="PANTHER" id="PTHR10784">
    <property type="entry name" value="TRANSLATION INITIATION FACTOR 6"/>
    <property type="match status" value="1"/>
</dbReference>
<dbReference type="Pfam" id="PF01912">
    <property type="entry name" value="eIF-6"/>
    <property type="match status" value="1"/>
</dbReference>
<dbReference type="PIRSF" id="PIRSF006413">
    <property type="entry name" value="IF-6"/>
    <property type="match status" value="1"/>
</dbReference>
<dbReference type="SMART" id="SM00654">
    <property type="entry name" value="eIF6"/>
    <property type="match status" value="1"/>
</dbReference>
<dbReference type="SUPFAM" id="SSF55909">
    <property type="entry name" value="Pentein"/>
    <property type="match status" value="1"/>
</dbReference>
<evidence type="ECO:0000255" key="1">
    <source>
        <dbReference type="HAMAP-Rule" id="MF_03132"/>
    </source>
</evidence>
<evidence type="ECO:0000305" key="2"/>
<accession>Q6GR45</accession>
<accession>Q6TXJ9</accession>
<name>IF6_XENLA</name>
<sequence length="245" mass="26654">MAVRASFENNNEIGCFAKLTNTYCLVAIGGSENFYSVFEGELSETIPVVHASIAGCRIIGRMCVGNRHGLMVPNNTTDQELQHMRNSLPDSVRIQRVEERLSALGNVIACNDYVALVHPDLDRETEEILADVLKVEVFRQTIAEQVLVGSYCAFSNQGGLLHPKTSIEDQDELSSLLQVPLVTGTVNRGSEVIAAGMVVNDWCAFCGLDTTSTELSVIESVFKLSDAHPSTIATSMRDSLIDSLT</sequence>
<organism>
    <name type="scientific">Xenopus laevis</name>
    <name type="common">African clawed frog</name>
    <dbReference type="NCBI Taxonomy" id="8355"/>
    <lineage>
        <taxon>Eukaryota</taxon>
        <taxon>Metazoa</taxon>
        <taxon>Chordata</taxon>
        <taxon>Craniata</taxon>
        <taxon>Vertebrata</taxon>
        <taxon>Euteleostomi</taxon>
        <taxon>Amphibia</taxon>
        <taxon>Batrachia</taxon>
        <taxon>Anura</taxon>
        <taxon>Pipoidea</taxon>
        <taxon>Pipidae</taxon>
        <taxon>Xenopodinae</taxon>
        <taxon>Xenopus</taxon>
        <taxon>Xenopus</taxon>
    </lineage>
</organism>
<proteinExistence type="evidence at transcript level"/>
<feature type="chain" id="PRO_0000402097" description="Eukaryotic translation initiation factor 6">
    <location>
        <begin position="1"/>
        <end position="245"/>
    </location>
</feature>
<feature type="sequence conflict" description="In Ref. 1; AAQ88443." evidence="2" ref="1">
    <original>D</original>
    <variation>G</variation>
    <location>
        <position position="238"/>
    </location>
</feature>
<protein>
    <recommendedName>
        <fullName evidence="1">Eukaryotic translation initiation factor 6</fullName>
        <shortName evidence="1">eIF-6</shortName>
    </recommendedName>
</protein>
<gene>
    <name type="primary">eif6</name>
</gene>